<proteinExistence type="inferred from homology"/>
<evidence type="ECO:0000269" key="1">
    <source>
    </source>
</evidence>
<evidence type="ECO:0000305" key="2"/>
<keyword id="KW-1003">Cell membrane</keyword>
<keyword id="KW-0328">Glycosyltransferase</keyword>
<keyword id="KW-0472">Membrane</keyword>
<keyword id="KW-0536">Nodulation</keyword>
<keyword id="KW-1185">Reference proteome</keyword>
<keyword id="KW-0808">Transferase</keyword>
<reference key="1">
    <citation type="journal article" date="1989" name="Mol. Gen. Genet.">
        <title>Common nodABC genes in Nod locus 1 of Azorhizobium caulinodans: nucleotide sequence and plant-inducible expression.</title>
        <authorList>
            <person name="Goethals K."/>
            <person name="Gao M."/>
            <person name="Tomekpe K."/>
            <person name="van Montagu M."/>
            <person name="Holsters M."/>
        </authorList>
    </citation>
    <scope>NUCLEOTIDE SEQUENCE [GENOMIC DNA]</scope>
</reference>
<reference key="2">
    <citation type="submission" date="2007-04" db="EMBL/GenBank/DDBJ databases">
        <title>Complete genome sequence of the nitrogen-fixing bacterium Azorhizobium caulinodans ORS571.</title>
        <authorList>
            <person name="Lee K.B."/>
            <person name="Backer P.D."/>
            <person name="Aono T."/>
            <person name="Liu C.T."/>
            <person name="Suzuki S."/>
            <person name="Suzuki T."/>
            <person name="Kaneko T."/>
            <person name="Yamada M."/>
            <person name="Tabata S."/>
            <person name="Kupfer D.M."/>
            <person name="Najar F.Z."/>
            <person name="Wiley G.B."/>
            <person name="Roe B."/>
            <person name="Binnewies T."/>
            <person name="Ussery D."/>
            <person name="Vereecke D."/>
            <person name="Gevers D."/>
            <person name="Holsters M."/>
            <person name="Oyaizu H."/>
        </authorList>
    </citation>
    <scope>NUCLEOTIDE SEQUENCE [LARGE SCALE GENOMIC DNA]</scope>
    <source>
        <strain>ATCC 43989 / DSM 5975 / JCM 20966 / LMG 6465 / NBRC 14845 / NCIMB 13405 / ORS 571</strain>
    </source>
</reference>
<reference key="3">
    <citation type="journal article" date="1994" name="Proc. Natl. Acad. Sci. U.S.A.">
        <title>The NodC protein of Azorhizobium caulinodans is an N-acetylglucosaminyltransferase.</title>
        <authorList>
            <person name="Geremia R.A."/>
            <person name="Mergaert P."/>
            <person name="Geelen D."/>
            <person name="van Montagu M."/>
            <person name="Holsters M."/>
        </authorList>
    </citation>
    <scope>FUNCTION</scope>
</reference>
<feature type="chain" id="PRO_0000197183" description="N-acetylglucosaminyltransferase">
    <location>
        <begin position="1"/>
        <end position="397"/>
    </location>
</feature>
<feature type="sequence conflict" description="In Ref. 1; AAB51164." evidence="2" ref="1">
    <original>KR</original>
    <variation>T</variation>
    <location>
        <begin position="119"/>
        <end position="120"/>
    </location>
</feature>
<feature type="sequence conflict" description="In Ref. 1; AAB51164." evidence="2" ref="1">
    <original>G</original>
    <variation>S</variation>
    <location>
        <position position="259"/>
    </location>
</feature>
<feature type="sequence conflict" description="In Ref. 1; AAB51164." evidence="2" ref="1">
    <original>LA</original>
    <variation>S</variation>
    <location>
        <begin position="270"/>
        <end position="271"/>
    </location>
</feature>
<dbReference type="EC" id="2.4.1.-"/>
<dbReference type="EMBL" id="L18897">
    <property type="protein sequence ID" value="AAB51164.1"/>
    <property type="molecule type" value="Genomic_DNA"/>
</dbReference>
<dbReference type="EMBL" id="AP009384">
    <property type="protein sequence ID" value="BAF89814.1"/>
    <property type="molecule type" value="Genomic_DNA"/>
</dbReference>
<dbReference type="PIR" id="JQ0396">
    <property type="entry name" value="JQ0396"/>
</dbReference>
<dbReference type="RefSeq" id="WP_012172339.1">
    <property type="nucleotide sequence ID" value="NC_009937.1"/>
</dbReference>
<dbReference type="SMR" id="Q07755"/>
<dbReference type="STRING" id="438753.AZC_3816"/>
<dbReference type="CAZy" id="GT2">
    <property type="family name" value="Glycosyltransferase Family 2"/>
</dbReference>
<dbReference type="KEGG" id="azc:AZC_3816"/>
<dbReference type="eggNOG" id="COG1215">
    <property type="taxonomic scope" value="Bacteria"/>
</dbReference>
<dbReference type="HOGENOM" id="CLU_029695_4_2_5"/>
<dbReference type="Proteomes" id="UP000000270">
    <property type="component" value="Chromosome"/>
</dbReference>
<dbReference type="GO" id="GO:0005886">
    <property type="term" value="C:plasma membrane"/>
    <property type="evidence" value="ECO:0007669"/>
    <property type="project" value="UniProtKB-SubCell"/>
</dbReference>
<dbReference type="GO" id="GO:0050501">
    <property type="term" value="F:hyaluronan synthase activity"/>
    <property type="evidence" value="ECO:0007669"/>
    <property type="project" value="TreeGrafter"/>
</dbReference>
<dbReference type="GO" id="GO:0085029">
    <property type="term" value="P:extracellular matrix assembly"/>
    <property type="evidence" value="ECO:0007669"/>
    <property type="project" value="TreeGrafter"/>
</dbReference>
<dbReference type="GO" id="GO:0030213">
    <property type="term" value="P:hyaluronan biosynthetic process"/>
    <property type="evidence" value="ECO:0007669"/>
    <property type="project" value="TreeGrafter"/>
</dbReference>
<dbReference type="Gene3D" id="3.90.550.10">
    <property type="entry name" value="Spore Coat Polysaccharide Biosynthesis Protein SpsA, Chain A"/>
    <property type="match status" value="1"/>
</dbReference>
<dbReference type="InterPro" id="IPR026463">
    <property type="entry name" value="Chitooligosach_Synthase_NodC"/>
</dbReference>
<dbReference type="InterPro" id="IPR001173">
    <property type="entry name" value="Glyco_trans_2-like"/>
</dbReference>
<dbReference type="InterPro" id="IPR029044">
    <property type="entry name" value="Nucleotide-diphossugar_trans"/>
</dbReference>
<dbReference type="NCBIfam" id="TIGR04242">
    <property type="entry name" value="nodulat_NodC"/>
    <property type="match status" value="1"/>
</dbReference>
<dbReference type="PANTHER" id="PTHR22913">
    <property type="entry name" value="HYALURONAN SYNTHASE"/>
    <property type="match status" value="1"/>
</dbReference>
<dbReference type="PANTHER" id="PTHR22913:SF12">
    <property type="entry name" value="MANNURONAN SYNTHASE"/>
    <property type="match status" value="1"/>
</dbReference>
<dbReference type="Pfam" id="PF00535">
    <property type="entry name" value="Glycos_transf_2"/>
    <property type="match status" value="1"/>
</dbReference>
<dbReference type="SUPFAM" id="SSF53448">
    <property type="entry name" value="Nucleotide-diphospho-sugar transferases"/>
    <property type="match status" value="1"/>
</dbReference>
<gene>
    <name type="primary">nodC</name>
    <name type="ordered locus">AZC_3816</name>
</gene>
<name>NODC_AZOC5</name>
<sequence length="397" mass="43834">MSVVDVIGLLATAAYVTLASAYKVVQFINVSSVTDVAGLESDALPLTPRVDVIVPTFNENSSTLLECVASICAQDYRGPITIVVVDDGSTNKTSFHAVCDKYASDERFIFVELDQNKGKRAAQMEAIRRTDGDLILNVDSDTVIDKDVVTKLASSMRAPNVGGVMGQLVAKNRERSWLTRLIDMEYWLACNEERIAQSRFGSVMCCCGPCAMYRRSAITPLLAEYEHQTFLGRPSNFGEDRHLTILMLKAGFRTGYVPGAVARTLVPDGLAPYLRQQLRWARSTYRDTALALRIKKNLSKYITFEICAQNLGTALLLVMTMISLSLTTSGSQTPVIILGVVVGMSIIRCCSVALIAKDFRFLYFIVHSALNVLILTPLKLYALLTIRDSRWLSRESS</sequence>
<accession>Q07755</accession>
<accession>A8IP06</accession>
<organism>
    <name type="scientific">Azorhizobium caulinodans (strain ATCC 43989 / DSM 5975 / JCM 20966 / LMG 6465 / NBRC 14845 / NCIMB 13405 / ORS 571)</name>
    <dbReference type="NCBI Taxonomy" id="438753"/>
    <lineage>
        <taxon>Bacteria</taxon>
        <taxon>Pseudomonadati</taxon>
        <taxon>Pseudomonadota</taxon>
        <taxon>Alphaproteobacteria</taxon>
        <taxon>Hyphomicrobiales</taxon>
        <taxon>Xanthobacteraceae</taxon>
        <taxon>Azorhizobium</taxon>
    </lineage>
</organism>
<protein>
    <recommendedName>
        <fullName>N-acetylglucosaminyltransferase</fullName>
        <ecNumber>2.4.1.-</ecNumber>
    </recommendedName>
    <alternativeName>
        <fullName>Nodulation protein C</fullName>
    </alternativeName>
</protein>
<comment type="function">
    <text evidence="1">Involved in the synthesis of Nod factor, a sulfated N-acyl-beta-1,4-tetrasaccharide of N-acetylglucosamine which initiates a series of events in the host plant species leading eventually to nodulation.</text>
</comment>
<comment type="subcellular location">
    <subcellularLocation>
        <location evidence="2">Cell membrane</location>
        <topology evidence="2">Peripheral membrane protein</topology>
    </subcellularLocation>
</comment>
<comment type="similarity">
    <text evidence="2">Belongs to the NodC/HAS family.</text>
</comment>